<keyword id="KW-0235">DNA replication</keyword>
<keyword id="KW-0238">DNA-binding</keyword>
<keyword id="KW-1048">Host nucleus</keyword>
<keyword id="KW-0479">Metal-binding</keyword>
<keyword id="KW-1185">Reference proteome</keyword>
<keyword id="KW-0862">Zinc</keyword>
<keyword id="KW-0863">Zinc-finger</keyword>
<name>DNBI_SHV21</name>
<gene>
    <name evidence="1" type="primary">DBP</name>
    <name type="synonym">6</name>
    <name type="synonym">KFRF1</name>
</gene>
<sequence length="1128" mass="127458">MATKTAQPSADNLGSRAPVEPCGYIYVYPKEGFPFKEASLLGNKNVGASAMSLPLLSDLTVESNFSFNVKAVHKKIDMTTLLVRVSAYHREAIVFFNTDLFEPIFVGPGLDILCSDARSLFGYTNFVPRTDLRDTVDIKDLYAPFYSEDSCFMAVVVTEGFKERLYFGNLVPIIAQGLKVQINGREAVKIPLYDEDLFSKSHEHLPRFYIPSVSKYLHDSVFTSIAQALRIRDVESVIRASEKQSIQDQYKLAKIVNSKDFSLQSVKCQDASAFMVIDCIAAELAMSYGLSFLEAPQDPCAVLDYTSWPIFETAETEEDRIKAIQDWNAMMSVHVYTHLFSTNSVLYLTKINKQTQSNKSEQNVYNTYFMQHGLAYAADATQRENGEPAFSGAPKFSGGTYTLYHLALASSFSPHLLARNCYYMQFCQHQKSTTNANYSVPQYVGTAAASDLCELCQGTCPASCIHTLFYRLKDRFPPVLGSQRRDPYVVTGVSGQYNDLDMLGNFATFREKEDEAVQNAESEKYTYWQLIQNVVEKLSTMGVTEGTVGSELITDIQSFLKTFRDIDNVVDSEVVKFMNCLVKNNINFRETIKTVHHVLHYCCNVFWQAPCAMFLNLFYKSVLAIIQDICLPIAMTYEQDNPSIGMMPSEWLKVHYQTIWTNFKSSCLDRGVLTGSEHKIVHTDMFCDFLNIDSALSGQIVPMKMQVRLAKALLTVPKTIKIKNRIVFSNSSMTETIQSGFIKSATKKDSYIVTGPYMKFLNSLHKVMFPNAKISALYLWHTFSQKKQLPVLPGISRENMVELANYVETSSKMHDDMNVLDIIPTTLLTYAKVRLNNTILRTCGQTQFYATTLQCLLPTLQTISATEYPHVLLDQSIMSVDHYLSSIKDKHALTVQTTLKEDIATVGKQRPIVTVPLVVNKYTGINGNTQIFQCGNLGYFMGRGVDRNLIPDSTGFRRQNNSSYMRRRHVFMTPMVAHLVKKNSNLNNLTFEVETIRKNVQNIFEDKDNLNIFDNVVLELVKGLGDSCENITEDDLQFYLGEYYIMSDEIWSRFQIITDSGAPWSVENVTKVLGCNKQEECKFEFVGVEEQLSCVPPQIEEFAPQATLSTLAASRKRKITSILSDIDL</sequence>
<feature type="chain" id="PRO_0000115755" description="Major DNA-binding protein">
    <location>
        <begin position="1"/>
        <end position="1128"/>
    </location>
</feature>
<feature type="zinc finger region" evidence="1">
    <location>
        <begin position="453"/>
        <end position="466"/>
    </location>
</feature>
<feature type="region of interest" description="Required for nuclear localization" evidence="1">
    <location>
        <begin position="1098"/>
        <end position="1128"/>
    </location>
</feature>
<reference key="1">
    <citation type="journal article" date="1990" name="Virology">
        <title>Structural organization of the conserved gene block of Herpesvirus saimiri coding for DNA polymerase, glycoprotein B, and major DNA binding protein.</title>
        <authorList>
            <person name="Albrecht J.-C."/>
            <person name="Fleckenstein B."/>
        </authorList>
    </citation>
    <scope>NUCLEOTIDE SEQUENCE [GENOMIC DNA]</scope>
</reference>
<reference key="2">
    <citation type="journal article" date="1992" name="J. Virol.">
        <title>Primary structure of the herpesvirus saimiri genome.</title>
        <authorList>
            <person name="Albrecht J.-C."/>
            <person name="Nicholas J."/>
            <person name="Biller D."/>
            <person name="Cameron K.R."/>
            <person name="Biesinger B."/>
            <person name="Newman C."/>
            <person name="Wittmann S."/>
            <person name="Craxton M.A."/>
            <person name="Coleman H."/>
            <person name="Fleckenstein B."/>
            <person name="Honess R.W."/>
        </authorList>
    </citation>
    <scope>NUCLEOTIDE SEQUENCE [LARGE SCALE GENOMIC DNA]</scope>
</reference>
<reference key="3">
    <citation type="journal article" date="1991" name="J. Virol.">
        <title>Regulation of the herpesvirus saimiri (HVS) delayed-early 110-kilodalton promoter by HVS immediate-early gene products and a homolog of the Epstein-Barr virus R trans activator.</title>
        <authorList>
            <person name="Nicholas J."/>
            <person name="Coles L.S."/>
            <person name="Newman C."/>
            <person name="Honess R.W."/>
        </authorList>
    </citation>
    <scope>NUCLEOTIDE SEQUENCE [GENOMIC DNA] OF 1-81</scope>
</reference>
<accession>P24910</accession>
<evidence type="ECO:0000255" key="1">
    <source>
        <dbReference type="HAMAP-Rule" id="MF_04007"/>
    </source>
</evidence>
<organismHost>
    <name type="scientific">Saimiri sciureus</name>
    <name type="common">Common squirrel monkey</name>
    <dbReference type="NCBI Taxonomy" id="9521"/>
</organismHost>
<comment type="function">
    <text>Single-stranded DNA-binding protein required for DNA replication.</text>
</comment>
<comment type="function">
    <text evidence="1">Plays several crucial roles in viral infection. Participates in the opening of the viral DNA origin to initiate replication by interacting with the origin-binding protein. May disrupt loops, hairpins and other secondary structures present on ssDNA to reduce and eliminate pausing of viral DNA polymerase at specific sites during elongation. Promotes viral DNA recombination by performing strand-transfer, characterized by the ability to transfer a DNA strand from a linear duplex to a complementary single-stranded DNA circle. Can also catalyze the renaturation of complementary single strands. Additionally, reorganizes the host cell nucleus, leading to the formation of prereplicative sites and replication compartments. This process is driven by the protein which can form double-helical filaments in the absence of DNA.</text>
</comment>
<comment type="subunit">
    <text evidence="1">Homooligomers. Forms double-helical filaments necessary for the formation of replication compartments within the host nucleus. Interacts with the origin-binding protein. Interacts with the helicase primase complex; this interaction stimulates primer synthesis activity of the helicase-primase complex. Interacts with the DNA polymerase. Interacts with the alkaline exonuclease; this interaction increases its nuclease processivity.</text>
</comment>
<comment type="subcellular location">
    <subcellularLocation>
        <location evidence="1">Host nucleus</location>
    </subcellularLocation>
    <text evidence="1">In the absence of DNA replication, found in the nuclear framework-associated structures (prereplicative sites). As viral DNA replication proceeds, it migrates to globular intranuclear structures (replication compartments).</text>
</comment>
<comment type="similarity">
    <text evidence="1">Belongs to the herpesviridae major DNA-binding protein family.</text>
</comment>
<organism>
    <name type="scientific">Saimiriine herpesvirus 2 (strain 11)</name>
    <name type="common">SaHV-2</name>
    <name type="synonym">Herpesvirus saimiri</name>
    <dbReference type="NCBI Taxonomy" id="10383"/>
    <lineage>
        <taxon>Viruses</taxon>
        <taxon>Duplodnaviria</taxon>
        <taxon>Heunggongvirae</taxon>
        <taxon>Peploviricota</taxon>
        <taxon>Herviviricetes</taxon>
        <taxon>Herpesvirales</taxon>
        <taxon>Orthoherpesviridae</taxon>
        <taxon>Gammaherpesvirinae</taxon>
        <taxon>Rhadinovirus</taxon>
        <taxon>Rhadinovirus saimiriinegamma2</taxon>
        <taxon>Saimiriine herpesvirus 2</taxon>
    </lineage>
</organism>
<dbReference type="EMBL" id="X64346">
    <property type="protein sequence ID" value="CAA45629.1"/>
    <property type="molecule type" value="Genomic_DNA"/>
</dbReference>
<dbReference type="EMBL" id="M31122">
    <property type="protein sequence ID" value="AAA46162.1"/>
    <property type="molecule type" value="Genomic_DNA"/>
</dbReference>
<dbReference type="EMBL" id="M60849">
    <property type="protein sequence ID" value="AAA46157.1"/>
    <property type="molecule type" value="Genomic_DNA"/>
</dbReference>
<dbReference type="RefSeq" id="NP_040208.1">
    <property type="nucleotide sequence ID" value="NC_001350.1"/>
</dbReference>
<dbReference type="SMR" id="P24910"/>
<dbReference type="KEGG" id="vg:1682456"/>
<dbReference type="Proteomes" id="UP000000587">
    <property type="component" value="Segment"/>
</dbReference>
<dbReference type="GO" id="GO:0042025">
    <property type="term" value="C:host cell nucleus"/>
    <property type="evidence" value="ECO:0007669"/>
    <property type="project" value="UniProtKB-SubCell"/>
</dbReference>
<dbReference type="GO" id="GO:0003697">
    <property type="term" value="F:single-stranded DNA binding"/>
    <property type="evidence" value="ECO:0007669"/>
    <property type="project" value="InterPro"/>
</dbReference>
<dbReference type="GO" id="GO:0008270">
    <property type="term" value="F:zinc ion binding"/>
    <property type="evidence" value="ECO:0007669"/>
    <property type="project" value="UniProtKB-KW"/>
</dbReference>
<dbReference type="GO" id="GO:0006260">
    <property type="term" value="P:DNA replication"/>
    <property type="evidence" value="ECO:0007669"/>
    <property type="project" value="UniProtKB-KW"/>
</dbReference>
<dbReference type="Gene3D" id="1.20.190.40">
    <property type="entry name" value="Viral ssDNA binding protein, head domain"/>
    <property type="match status" value="2"/>
</dbReference>
<dbReference type="HAMAP" id="MF_04007">
    <property type="entry name" value="HSV_DNBI"/>
    <property type="match status" value="1"/>
</dbReference>
<dbReference type="InterPro" id="IPR035989">
    <property type="entry name" value="DBP_sf"/>
</dbReference>
<dbReference type="InterPro" id="IPR043031">
    <property type="entry name" value="Viral_ssDBP_head"/>
</dbReference>
<dbReference type="InterPro" id="IPR000635">
    <property type="entry name" value="Viral_ssDNA-bd"/>
</dbReference>
<dbReference type="Pfam" id="PF00747">
    <property type="entry name" value="Viral_DNA_bp"/>
    <property type="match status" value="1"/>
</dbReference>
<dbReference type="SUPFAM" id="SSF118208">
    <property type="entry name" value="Viral ssDNA binding protein"/>
    <property type="match status" value="1"/>
</dbReference>
<protein>
    <recommendedName>
        <fullName evidence="1">Major DNA-binding protein</fullName>
    </recommendedName>
</protein>
<proteinExistence type="inferred from homology"/>